<protein>
    <recommendedName>
        <fullName>Steroid receptor-associated and regulated protein</fullName>
    </recommendedName>
</protein>
<name>SRARP_MOUSE</name>
<accession>Q3ULG3</accession>
<feature type="chain" id="PRO_0000442318" description="Steroid receptor-associated and regulated protein">
    <location>
        <begin position="1"/>
        <end position="163"/>
    </location>
</feature>
<feature type="region of interest" description="Disordered" evidence="2">
    <location>
        <begin position="1"/>
        <end position="30"/>
    </location>
</feature>
<feature type="region of interest" description="Disordered" evidence="2">
    <location>
        <begin position="96"/>
        <end position="149"/>
    </location>
</feature>
<feature type="compositionally biased region" description="Basic and acidic residues" evidence="2">
    <location>
        <begin position="1"/>
        <end position="16"/>
    </location>
</feature>
<feature type="compositionally biased region" description="Polar residues" evidence="2">
    <location>
        <begin position="17"/>
        <end position="26"/>
    </location>
</feature>
<reference key="1">
    <citation type="journal article" date="2005" name="Science">
        <title>The transcriptional landscape of the mammalian genome.</title>
        <authorList>
            <person name="Carninci P."/>
            <person name="Kasukawa T."/>
            <person name="Katayama S."/>
            <person name="Gough J."/>
            <person name="Frith M.C."/>
            <person name="Maeda N."/>
            <person name="Oyama R."/>
            <person name="Ravasi T."/>
            <person name="Lenhard B."/>
            <person name="Wells C."/>
            <person name="Kodzius R."/>
            <person name="Shimokawa K."/>
            <person name="Bajic V.B."/>
            <person name="Brenner S.E."/>
            <person name="Batalov S."/>
            <person name="Forrest A.R."/>
            <person name="Zavolan M."/>
            <person name="Davis M.J."/>
            <person name="Wilming L.G."/>
            <person name="Aidinis V."/>
            <person name="Allen J.E."/>
            <person name="Ambesi-Impiombato A."/>
            <person name="Apweiler R."/>
            <person name="Aturaliya R.N."/>
            <person name="Bailey T.L."/>
            <person name="Bansal M."/>
            <person name="Baxter L."/>
            <person name="Beisel K.W."/>
            <person name="Bersano T."/>
            <person name="Bono H."/>
            <person name="Chalk A.M."/>
            <person name="Chiu K.P."/>
            <person name="Choudhary V."/>
            <person name="Christoffels A."/>
            <person name="Clutterbuck D.R."/>
            <person name="Crowe M.L."/>
            <person name="Dalla E."/>
            <person name="Dalrymple B.P."/>
            <person name="de Bono B."/>
            <person name="Della Gatta G."/>
            <person name="di Bernardo D."/>
            <person name="Down T."/>
            <person name="Engstrom P."/>
            <person name="Fagiolini M."/>
            <person name="Faulkner G."/>
            <person name="Fletcher C.F."/>
            <person name="Fukushima T."/>
            <person name="Furuno M."/>
            <person name="Futaki S."/>
            <person name="Gariboldi M."/>
            <person name="Georgii-Hemming P."/>
            <person name="Gingeras T.R."/>
            <person name="Gojobori T."/>
            <person name="Green R.E."/>
            <person name="Gustincich S."/>
            <person name="Harbers M."/>
            <person name="Hayashi Y."/>
            <person name="Hensch T.K."/>
            <person name="Hirokawa N."/>
            <person name="Hill D."/>
            <person name="Huminiecki L."/>
            <person name="Iacono M."/>
            <person name="Ikeo K."/>
            <person name="Iwama A."/>
            <person name="Ishikawa T."/>
            <person name="Jakt M."/>
            <person name="Kanapin A."/>
            <person name="Katoh M."/>
            <person name="Kawasawa Y."/>
            <person name="Kelso J."/>
            <person name="Kitamura H."/>
            <person name="Kitano H."/>
            <person name="Kollias G."/>
            <person name="Krishnan S.P."/>
            <person name="Kruger A."/>
            <person name="Kummerfeld S.K."/>
            <person name="Kurochkin I.V."/>
            <person name="Lareau L.F."/>
            <person name="Lazarevic D."/>
            <person name="Lipovich L."/>
            <person name="Liu J."/>
            <person name="Liuni S."/>
            <person name="McWilliam S."/>
            <person name="Madan Babu M."/>
            <person name="Madera M."/>
            <person name="Marchionni L."/>
            <person name="Matsuda H."/>
            <person name="Matsuzawa S."/>
            <person name="Miki H."/>
            <person name="Mignone F."/>
            <person name="Miyake S."/>
            <person name="Morris K."/>
            <person name="Mottagui-Tabar S."/>
            <person name="Mulder N."/>
            <person name="Nakano N."/>
            <person name="Nakauchi H."/>
            <person name="Ng P."/>
            <person name="Nilsson R."/>
            <person name="Nishiguchi S."/>
            <person name="Nishikawa S."/>
            <person name="Nori F."/>
            <person name="Ohara O."/>
            <person name="Okazaki Y."/>
            <person name="Orlando V."/>
            <person name="Pang K.C."/>
            <person name="Pavan W.J."/>
            <person name="Pavesi G."/>
            <person name="Pesole G."/>
            <person name="Petrovsky N."/>
            <person name="Piazza S."/>
            <person name="Reed J."/>
            <person name="Reid J.F."/>
            <person name="Ring B.Z."/>
            <person name="Ringwald M."/>
            <person name="Rost B."/>
            <person name="Ruan Y."/>
            <person name="Salzberg S.L."/>
            <person name="Sandelin A."/>
            <person name="Schneider C."/>
            <person name="Schoenbach C."/>
            <person name="Sekiguchi K."/>
            <person name="Semple C.A."/>
            <person name="Seno S."/>
            <person name="Sessa L."/>
            <person name="Sheng Y."/>
            <person name="Shibata Y."/>
            <person name="Shimada H."/>
            <person name="Shimada K."/>
            <person name="Silva D."/>
            <person name="Sinclair B."/>
            <person name="Sperling S."/>
            <person name="Stupka E."/>
            <person name="Sugiura K."/>
            <person name="Sultana R."/>
            <person name="Takenaka Y."/>
            <person name="Taki K."/>
            <person name="Tammoja K."/>
            <person name="Tan S.L."/>
            <person name="Tang S."/>
            <person name="Taylor M.S."/>
            <person name="Tegner J."/>
            <person name="Teichmann S.A."/>
            <person name="Ueda H.R."/>
            <person name="van Nimwegen E."/>
            <person name="Verardo R."/>
            <person name="Wei C.L."/>
            <person name="Yagi K."/>
            <person name="Yamanishi H."/>
            <person name="Zabarovsky E."/>
            <person name="Zhu S."/>
            <person name="Zimmer A."/>
            <person name="Hide W."/>
            <person name="Bult C."/>
            <person name="Grimmond S.M."/>
            <person name="Teasdale R.D."/>
            <person name="Liu E.T."/>
            <person name="Brusic V."/>
            <person name="Quackenbush J."/>
            <person name="Wahlestedt C."/>
            <person name="Mattick J.S."/>
            <person name="Hume D.A."/>
            <person name="Kai C."/>
            <person name="Sasaki D."/>
            <person name="Tomaru Y."/>
            <person name="Fukuda S."/>
            <person name="Kanamori-Katayama M."/>
            <person name="Suzuki M."/>
            <person name="Aoki J."/>
            <person name="Arakawa T."/>
            <person name="Iida J."/>
            <person name="Imamura K."/>
            <person name="Itoh M."/>
            <person name="Kato T."/>
            <person name="Kawaji H."/>
            <person name="Kawagashira N."/>
            <person name="Kawashima T."/>
            <person name="Kojima M."/>
            <person name="Kondo S."/>
            <person name="Konno H."/>
            <person name="Nakano K."/>
            <person name="Ninomiya N."/>
            <person name="Nishio T."/>
            <person name="Okada M."/>
            <person name="Plessy C."/>
            <person name="Shibata K."/>
            <person name="Shiraki T."/>
            <person name="Suzuki S."/>
            <person name="Tagami M."/>
            <person name="Waki K."/>
            <person name="Watahiki A."/>
            <person name="Okamura-Oho Y."/>
            <person name="Suzuki H."/>
            <person name="Kawai J."/>
            <person name="Hayashizaki Y."/>
        </authorList>
    </citation>
    <scope>NUCLEOTIDE SEQUENCE [LARGE SCALE MRNA]</scope>
    <source>
        <strain>C57BL/6J</strain>
    </source>
</reference>
<reference key="2">
    <citation type="journal article" date="2009" name="PLoS Biol.">
        <title>Lineage-specific biology revealed by a finished genome assembly of the mouse.</title>
        <authorList>
            <person name="Church D.M."/>
            <person name="Goodstadt L."/>
            <person name="Hillier L.W."/>
            <person name="Zody M.C."/>
            <person name="Goldstein S."/>
            <person name="She X."/>
            <person name="Bult C.J."/>
            <person name="Agarwala R."/>
            <person name="Cherry J.L."/>
            <person name="DiCuccio M."/>
            <person name="Hlavina W."/>
            <person name="Kapustin Y."/>
            <person name="Meric P."/>
            <person name="Maglott D."/>
            <person name="Birtle Z."/>
            <person name="Marques A.C."/>
            <person name="Graves T."/>
            <person name="Zhou S."/>
            <person name="Teague B."/>
            <person name="Potamousis K."/>
            <person name="Churas C."/>
            <person name="Place M."/>
            <person name="Herschleb J."/>
            <person name="Runnheim R."/>
            <person name="Forrest D."/>
            <person name="Amos-Landgraf J."/>
            <person name="Schwartz D.C."/>
            <person name="Cheng Z."/>
            <person name="Lindblad-Toh K."/>
            <person name="Eichler E.E."/>
            <person name="Ponting C.P."/>
        </authorList>
    </citation>
    <scope>NUCLEOTIDE SEQUENCE [LARGE SCALE GENOMIC DNA]</scope>
    <source>
        <strain>C57BL/6J</strain>
    </source>
</reference>
<reference key="3">
    <citation type="submission" date="2005-07" db="EMBL/GenBank/DDBJ databases">
        <authorList>
            <person name="Mural R.J."/>
            <person name="Adams M.D."/>
            <person name="Myers E.W."/>
            <person name="Smith H.O."/>
            <person name="Venter J.C."/>
        </authorList>
    </citation>
    <scope>NUCLEOTIDE SEQUENCE [LARGE SCALE GENOMIC DNA]</scope>
</reference>
<reference key="4">
    <citation type="journal article" date="2004" name="Genome Res.">
        <title>The status, quality, and expansion of the NIH full-length cDNA project: the Mammalian Gene Collection (MGC).</title>
        <authorList>
            <consortium name="The MGC Project Team"/>
        </authorList>
    </citation>
    <scope>NUCLEOTIDE SEQUENCE [LARGE SCALE MRNA]</scope>
</reference>
<organism>
    <name type="scientific">Mus musculus</name>
    <name type="common">Mouse</name>
    <dbReference type="NCBI Taxonomy" id="10090"/>
    <lineage>
        <taxon>Eukaryota</taxon>
        <taxon>Metazoa</taxon>
        <taxon>Chordata</taxon>
        <taxon>Craniata</taxon>
        <taxon>Vertebrata</taxon>
        <taxon>Euteleostomi</taxon>
        <taxon>Mammalia</taxon>
        <taxon>Eutheria</taxon>
        <taxon>Euarchontoglires</taxon>
        <taxon>Glires</taxon>
        <taxon>Rodentia</taxon>
        <taxon>Myomorpha</taxon>
        <taxon>Muroidea</taxon>
        <taxon>Muridae</taxon>
        <taxon>Murinae</taxon>
        <taxon>Mus</taxon>
        <taxon>Mus</taxon>
    </lineage>
</organism>
<gene>
    <name evidence="3" type="primary">Srarp</name>
</gene>
<keyword id="KW-1185">Reference proteome</keyword>
<sequence length="163" mass="17055">MAFSKDPRRTSLRDSSVEMSSGTQPSCAPKAMPTAHVTFLIDCATGKQVSLAASTAPPHASRANQGCVAPPMKTFVMFRGKTTMLGTQNISLSRGALDGAKDTLPPYRGLGAPHSLPASLPGPQNDPKAQGSSLKPGATEKHSTREKVKHSLKALTCLCGQVE</sequence>
<comment type="function">
    <text evidence="1">May regulate the transcriptional function of androgen and estrogen receptors.</text>
</comment>
<comment type="subunit">
    <text evidence="1">Interacts with 14-3-3 proteins.</text>
</comment>
<proteinExistence type="evidence at transcript level"/>
<evidence type="ECO:0000250" key="1">
    <source>
        <dbReference type="UniProtKB" id="Q8NEQ6"/>
    </source>
</evidence>
<evidence type="ECO:0000256" key="2">
    <source>
        <dbReference type="SAM" id="MobiDB-lite"/>
    </source>
</evidence>
<evidence type="ECO:0000312" key="3">
    <source>
        <dbReference type="MGI" id="MGI:2685540"/>
    </source>
</evidence>
<dbReference type="EMBL" id="AK145525">
    <property type="protein sequence ID" value="BAE26485.1"/>
    <property type="molecule type" value="mRNA"/>
</dbReference>
<dbReference type="EMBL" id="AL670285">
    <property type="status" value="NOT_ANNOTATED_CDS"/>
    <property type="molecule type" value="Genomic_DNA"/>
</dbReference>
<dbReference type="EMBL" id="CH466615">
    <property type="protein sequence ID" value="EDL13374.1"/>
    <property type="molecule type" value="Genomic_DNA"/>
</dbReference>
<dbReference type="EMBL" id="BC147054">
    <property type="protein sequence ID" value="AAI47055.1"/>
    <property type="molecule type" value="mRNA"/>
</dbReference>
<dbReference type="EMBL" id="BC147055">
    <property type="protein sequence ID" value="AAI47056.1"/>
    <property type="molecule type" value="mRNA"/>
</dbReference>
<dbReference type="CCDS" id="CCDS51347.1"/>
<dbReference type="RefSeq" id="NP_001028546.1">
    <property type="nucleotide sequence ID" value="NM_001033374.3"/>
</dbReference>
<dbReference type="FunCoup" id="Q3ULG3">
    <property type="interactions" value="437"/>
</dbReference>
<dbReference type="iPTMnet" id="Q3ULG3"/>
<dbReference type="PhosphoSitePlus" id="Q3ULG3"/>
<dbReference type="PaxDb" id="10090-ENSMUSP00000092122"/>
<dbReference type="Antibodypedia" id="14459">
    <property type="antibodies" value="78 antibodies from 19 providers"/>
</dbReference>
<dbReference type="Ensembl" id="ENSMUST00000094544.3">
    <property type="protein sequence ID" value="ENSMUSP00000092122.3"/>
    <property type="gene ID" value="ENSMUSG00000070637.3"/>
</dbReference>
<dbReference type="GeneID" id="277744"/>
<dbReference type="KEGG" id="mmu:277744"/>
<dbReference type="UCSC" id="uc008vok.2">
    <property type="organism name" value="mouse"/>
</dbReference>
<dbReference type="AGR" id="MGI:2685540"/>
<dbReference type="CTD" id="149563"/>
<dbReference type="MGI" id="MGI:2685540">
    <property type="gene designation" value="Srarp"/>
</dbReference>
<dbReference type="VEuPathDB" id="HostDB:ENSMUSG00000070637"/>
<dbReference type="eggNOG" id="ENOG502TD74">
    <property type="taxonomic scope" value="Eukaryota"/>
</dbReference>
<dbReference type="GeneTree" id="ENSGT00390000000265"/>
<dbReference type="HOGENOM" id="CLU_110067_0_0_1"/>
<dbReference type="InParanoid" id="Q3ULG3"/>
<dbReference type="OMA" id="AHLTFII"/>
<dbReference type="OrthoDB" id="9451422at2759"/>
<dbReference type="PhylomeDB" id="Q3ULG3"/>
<dbReference type="TreeFam" id="TF338217"/>
<dbReference type="BioGRID-ORCS" id="277744">
    <property type="hits" value="2 hits in 70 CRISPR screens"/>
</dbReference>
<dbReference type="ChiTaRS" id="Srarp">
    <property type="organism name" value="mouse"/>
</dbReference>
<dbReference type="PRO" id="PR:Q3ULG3"/>
<dbReference type="Proteomes" id="UP000000589">
    <property type="component" value="Chromosome 4"/>
</dbReference>
<dbReference type="RNAct" id="Q3ULG3">
    <property type="molecule type" value="protein"/>
</dbReference>
<dbReference type="Bgee" id="ENSMUSG00000070637">
    <property type="expression patterns" value="Expressed in mesodermal cell in embryo and 32 other cell types or tissues"/>
</dbReference>
<dbReference type="GO" id="GO:0005737">
    <property type="term" value="C:cytoplasm"/>
    <property type="evidence" value="ECO:0000250"/>
    <property type="project" value="UniProtKB"/>
</dbReference>
<dbReference type="GO" id="GO:0005634">
    <property type="term" value="C:nucleus"/>
    <property type="evidence" value="ECO:0000250"/>
    <property type="project" value="UniProtKB"/>
</dbReference>
<dbReference type="GO" id="GO:0033148">
    <property type="term" value="P:positive regulation of intracellular estrogen receptor signaling pathway"/>
    <property type="evidence" value="ECO:0000250"/>
    <property type="project" value="UniProtKB"/>
</dbReference>
<dbReference type="InterPro" id="IPR027852">
    <property type="entry name" value="C1ORF64"/>
</dbReference>
<dbReference type="PANTHER" id="PTHR38494">
    <property type="entry name" value="STEROID RECEPTOR-ASSOCIATED AND REGULATED PROTEIN"/>
    <property type="match status" value="1"/>
</dbReference>
<dbReference type="PANTHER" id="PTHR38494:SF1">
    <property type="entry name" value="STEROID RECEPTOR-ASSOCIATED AND REGULATED PROTEIN"/>
    <property type="match status" value="1"/>
</dbReference>
<dbReference type="Pfam" id="PF15547">
    <property type="entry name" value="C1ORF64"/>
    <property type="match status" value="1"/>
</dbReference>